<dbReference type="EMBL" id="CR858471">
    <property type="protein sequence ID" value="CAH90699.1"/>
    <property type="molecule type" value="mRNA"/>
</dbReference>
<dbReference type="RefSeq" id="NP_001125385.1">
    <property type="nucleotide sequence ID" value="NM_001131913.2"/>
</dbReference>
<dbReference type="SMR" id="Q5RC11"/>
<dbReference type="STRING" id="9601.ENSPPYP00000002010"/>
<dbReference type="GeneID" id="100172290"/>
<dbReference type="KEGG" id="pon:100172290"/>
<dbReference type="CTD" id="6135"/>
<dbReference type="eggNOG" id="KOG0397">
    <property type="taxonomic scope" value="Eukaryota"/>
</dbReference>
<dbReference type="InParanoid" id="Q5RC11"/>
<dbReference type="OrthoDB" id="1734943at2759"/>
<dbReference type="Proteomes" id="UP000001595">
    <property type="component" value="Unplaced"/>
</dbReference>
<dbReference type="GO" id="GO:0005737">
    <property type="term" value="C:cytoplasm"/>
    <property type="evidence" value="ECO:0000250"/>
    <property type="project" value="UniProtKB"/>
</dbReference>
<dbReference type="GO" id="GO:0005730">
    <property type="term" value="C:nucleolus"/>
    <property type="evidence" value="ECO:0000250"/>
    <property type="project" value="UniProtKB"/>
</dbReference>
<dbReference type="GO" id="GO:0005654">
    <property type="term" value="C:nucleoplasm"/>
    <property type="evidence" value="ECO:0000250"/>
    <property type="project" value="UniProtKB"/>
</dbReference>
<dbReference type="GO" id="GO:1990904">
    <property type="term" value="C:ribonucleoprotein complex"/>
    <property type="evidence" value="ECO:0007669"/>
    <property type="project" value="UniProtKB-KW"/>
</dbReference>
<dbReference type="GO" id="GO:0005840">
    <property type="term" value="C:ribosome"/>
    <property type="evidence" value="ECO:0007669"/>
    <property type="project" value="UniProtKB-KW"/>
</dbReference>
<dbReference type="GO" id="GO:0019843">
    <property type="term" value="F:rRNA binding"/>
    <property type="evidence" value="ECO:0007669"/>
    <property type="project" value="UniProtKB-KW"/>
</dbReference>
<dbReference type="GO" id="GO:0003735">
    <property type="term" value="F:structural constituent of ribosome"/>
    <property type="evidence" value="ECO:0007669"/>
    <property type="project" value="InterPro"/>
</dbReference>
<dbReference type="GO" id="GO:0032435">
    <property type="term" value="P:negative regulation of proteasomal ubiquitin-dependent protein catabolic process"/>
    <property type="evidence" value="ECO:0000250"/>
    <property type="project" value="UniProtKB"/>
</dbReference>
<dbReference type="GO" id="GO:1901798">
    <property type="term" value="P:positive regulation of signal transduction by p53 class mediator"/>
    <property type="evidence" value="ECO:0000250"/>
    <property type="project" value="UniProtKB"/>
</dbReference>
<dbReference type="GO" id="GO:0034504">
    <property type="term" value="P:protein localization to nucleus"/>
    <property type="evidence" value="ECO:0000250"/>
    <property type="project" value="UniProtKB"/>
</dbReference>
<dbReference type="GO" id="GO:0006412">
    <property type="term" value="P:translation"/>
    <property type="evidence" value="ECO:0007669"/>
    <property type="project" value="InterPro"/>
</dbReference>
<dbReference type="FunFam" id="3.30.1440.10:FF:000002">
    <property type="entry name" value="60S ribosomal protein L11"/>
    <property type="match status" value="1"/>
</dbReference>
<dbReference type="Gene3D" id="3.30.1440.10">
    <property type="match status" value="1"/>
</dbReference>
<dbReference type="InterPro" id="IPR002132">
    <property type="entry name" value="Ribosomal_uL5"/>
</dbReference>
<dbReference type="InterPro" id="IPR031309">
    <property type="entry name" value="Ribosomal_uL5_C"/>
</dbReference>
<dbReference type="InterPro" id="IPR020929">
    <property type="entry name" value="Ribosomal_uL5_CS"/>
</dbReference>
<dbReference type="InterPro" id="IPR022803">
    <property type="entry name" value="Ribosomal_uL5_dom_sf"/>
</dbReference>
<dbReference type="InterPro" id="IPR031310">
    <property type="entry name" value="Ribosomal_uL5_N"/>
</dbReference>
<dbReference type="NCBIfam" id="NF003258">
    <property type="entry name" value="PRK04219.1"/>
    <property type="match status" value="1"/>
</dbReference>
<dbReference type="PANTHER" id="PTHR11994">
    <property type="entry name" value="60S RIBOSOMAL PROTEIN L11-RELATED"/>
    <property type="match status" value="1"/>
</dbReference>
<dbReference type="Pfam" id="PF00281">
    <property type="entry name" value="Ribosomal_L5"/>
    <property type="match status" value="1"/>
</dbReference>
<dbReference type="Pfam" id="PF00673">
    <property type="entry name" value="Ribosomal_L5_C"/>
    <property type="match status" value="1"/>
</dbReference>
<dbReference type="PIRSF" id="PIRSF002161">
    <property type="entry name" value="Ribosomal_L5"/>
    <property type="match status" value="1"/>
</dbReference>
<dbReference type="SUPFAM" id="SSF55282">
    <property type="entry name" value="RL5-like"/>
    <property type="match status" value="1"/>
</dbReference>
<dbReference type="PROSITE" id="PS00358">
    <property type="entry name" value="RIBOSOMAL_L5"/>
    <property type="match status" value="1"/>
</dbReference>
<evidence type="ECO:0000250" key="1">
    <source>
        <dbReference type="UniProtKB" id="P62913"/>
    </source>
</evidence>
<evidence type="ECO:0000250" key="2">
    <source>
        <dbReference type="UniProtKB" id="Q9CXW4"/>
    </source>
</evidence>
<evidence type="ECO:0000305" key="3"/>
<name>RL11_PONAB</name>
<sequence length="178" mass="20282">MAQDQGEKENPMRELRIRKLCLNICVGESGDRLTRAAKVLEQLTGQTPVFSKARYTVRSFGIRRNEKIAVHCTVRGAKAEEILEKGLKVREYELRKNNFSDTGNFGFGIQEHIDLGIKYDPSIGIYGLDFYVVLGRPGFSITDKKRRTGCIGAKHRISKEEAMRWFQQKYDGIILPGK</sequence>
<accession>Q5RC11</accession>
<reference key="1">
    <citation type="submission" date="2004-11" db="EMBL/GenBank/DDBJ databases">
        <authorList>
            <consortium name="The German cDNA consortium"/>
        </authorList>
    </citation>
    <scope>NUCLEOTIDE SEQUENCE [LARGE SCALE MRNA]</scope>
    <source>
        <tissue>Heart</tissue>
    </source>
</reference>
<organism>
    <name type="scientific">Pongo abelii</name>
    <name type="common">Sumatran orangutan</name>
    <name type="synonym">Pongo pygmaeus abelii</name>
    <dbReference type="NCBI Taxonomy" id="9601"/>
    <lineage>
        <taxon>Eukaryota</taxon>
        <taxon>Metazoa</taxon>
        <taxon>Chordata</taxon>
        <taxon>Craniata</taxon>
        <taxon>Vertebrata</taxon>
        <taxon>Euteleostomi</taxon>
        <taxon>Mammalia</taxon>
        <taxon>Eutheria</taxon>
        <taxon>Euarchontoglires</taxon>
        <taxon>Primates</taxon>
        <taxon>Haplorrhini</taxon>
        <taxon>Catarrhini</taxon>
        <taxon>Hominidae</taxon>
        <taxon>Pongo</taxon>
    </lineage>
</organism>
<protein>
    <recommendedName>
        <fullName evidence="3">Large ribosomal subunit protein uL5</fullName>
    </recommendedName>
    <alternativeName>
        <fullName>60S ribosomal protein L11</fullName>
    </alternativeName>
</protein>
<feature type="initiator methionine" description="Removed" evidence="1">
    <location>
        <position position="1"/>
    </location>
</feature>
<feature type="chain" id="PRO_0000265732" description="Large ribosomal subunit protein uL5">
    <location>
        <begin position="2"/>
        <end position="178"/>
    </location>
</feature>
<feature type="modified residue" description="N-acetylalanine" evidence="1">
    <location>
        <position position="2"/>
    </location>
</feature>
<feature type="modified residue" description="Phosphothreonine" evidence="1">
    <location>
        <position position="44"/>
    </location>
</feature>
<feature type="modified residue" description="Phosphothreonine" evidence="1">
    <location>
        <position position="47"/>
    </location>
</feature>
<feature type="modified residue" description="N6-acetyllysine; alternate" evidence="1">
    <location>
        <position position="52"/>
    </location>
</feature>
<feature type="modified residue" description="N6-acetyllysine" evidence="1">
    <location>
        <position position="85"/>
    </location>
</feature>
<feature type="cross-link" description="Glycyl lysine isopeptide (Lys-Gly) (interchain with G-Cter in SUMO2)" evidence="1">
    <location>
        <position position="38"/>
    </location>
</feature>
<feature type="cross-link" description="Glycyl lysine isopeptide (Lys-Gly) (interchain with G-Cter in SUMO2); alternate" evidence="1">
    <location>
        <position position="52"/>
    </location>
</feature>
<feature type="cross-link" description="Glycyl lysine isopeptide (Lys-Gly) (interchain with G-Cter in SUMO2)" evidence="1">
    <location>
        <position position="154"/>
    </location>
</feature>
<gene>
    <name type="primary">RPL11</name>
</gene>
<comment type="function">
    <text evidence="1">Component of the ribosome, a large ribonucleoprotein complex responsible for the synthesis of proteins in the cell. The small ribosomal subunit (SSU) binds messenger RNAs (mRNAs) and translates the encoded message by selecting cognate aminoacyl-transfer RNA (tRNA) molecules. The large subunit (LSU) contains the ribosomal catalytic site termed the peptidyl transferase center (PTC), which catalyzes the formation of peptide bonds, thereby polymerizing the amino acids delivered by tRNAs into a polypeptide chain. The nascent polypeptides leave the ribosome through a tunnel in the LSU and interact with protein factors that function in enzymatic processing, targeting, and the membrane insertion of nascent chains at the exit of the ribosomal tunnel. As part of the 5S RNP/5S ribonucleoprotein particle it is an essential component of the LSU, required for its formation and the maturation of rRNAs. It also couples ribosome biogenesis to p53/TP53 activation. As part of the 5S RNP it accumulates in the nucleoplasm and inhibits MDM2, when ribosome biogenesis is perturbed, mediating the stabilization and the activation of TP53. Promotes nucleolar location of PML.</text>
</comment>
<comment type="subunit">
    <text evidence="1 2">Component of the large ribosomal subunit (LSU) (By similarity). Part of the 5S RNP complex, which is a LSU subcomplex composed of the 5S RNA, RPL5 and RPL11 (By similarity). Component of a hexameric 5S RNP precursor complex, composed of 5S RNA, RRS1, RPF2/BXDC1, RPL5, RPL11 and HEATR3; this complex acts as a precursor for ribosome assembly (By similarity). Interacts with PML (By similarity). Interacts with MDM2 (via its RanBP2-type zinc finger domain); negatively regulates MDM2-mediated TP53 ubiquitination and degradation (By similarity). Interacts with NOP53; retains RPL11 into the nucleolus (By similarity).</text>
</comment>
<comment type="subcellular location">
    <subcellularLocation>
        <location evidence="2">Nucleus</location>
        <location evidence="2">Nucleolus</location>
    </subcellularLocation>
    <subcellularLocation>
        <location evidence="2">Cytoplasm</location>
    </subcellularLocation>
</comment>
<comment type="similarity">
    <text evidence="3">Belongs to the universal ribosomal protein uL5 family.</text>
</comment>
<proteinExistence type="evidence at transcript level"/>
<keyword id="KW-0007">Acetylation</keyword>
<keyword id="KW-0963">Cytoplasm</keyword>
<keyword id="KW-1017">Isopeptide bond</keyword>
<keyword id="KW-0539">Nucleus</keyword>
<keyword id="KW-0597">Phosphoprotein</keyword>
<keyword id="KW-1185">Reference proteome</keyword>
<keyword id="KW-0687">Ribonucleoprotein</keyword>
<keyword id="KW-0689">Ribosomal protein</keyword>
<keyword id="KW-0694">RNA-binding</keyword>
<keyword id="KW-0699">rRNA-binding</keyword>
<keyword id="KW-0832">Ubl conjugation</keyword>